<name>TDH_ECO24</name>
<proteinExistence type="inferred from homology"/>
<reference key="1">
    <citation type="journal article" date="2008" name="J. Bacteriol.">
        <title>The pangenome structure of Escherichia coli: comparative genomic analysis of E. coli commensal and pathogenic isolates.</title>
        <authorList>
            <person name="Rasko D.A."/>
            <person name="Rosovitz M.J."/>
            <person name="Myers G.S.A."/>
            <person name="Mongodin E.F."/>
            <person name="Fricke W.F."/>
            <person name="Gajer P."/>
            <person name="Crabtree J."/>
            <person name="Sebaihia M."/>
            <person name="Thomson N.R."/>
            <person name="Chaudhuri R."/>
            <person name="Henderson I.R."/>
            <person name="Sperandio V."/>
            <person name="Ravel J."/>
        </authorList>
    </citation>
    <scope>NUCLEOTIDE SEQUENCE [LARGE SCALE GENOMIC DNA]</scope>
    <source>
        <strain>E24377A / ETEC</strain>
    </source>
</reference>
<evidence type="ECO:0000255" key="1">
    <source>
        <dbReference type="HAMAP-Rule" id="MF_00627"/>
    </source>
</evidence>
<comment type="function">
    <text evidence="1">Catalyzes the NAD(+)-dependent oxidation of L-threonine to 2-amino-3-ketobutyrate.</text>
</comment>
<comment type="catalytic activity">
    <reaction evidence="1">
        <text>L-threonine + NAD(+) = (2S)-2-amino-3-oxobutanoate + NADH + H(+)</text>
        <dbReference type="Rhea" id="RHEA:13161"/>
        <dbReference type="ChEBI" id="CHEBI:15378"/>
        <dbReference type="ChEBI" id="CHEBI:57540"/>
        <dbReference type="ChEBI" id="CHEBI:57926"/>
        <dbReference type="ChEBI" id="CHEBI:57945"/>
        <dbReference type="ChEBI" id="CHEBI:78948"/>
        <dbReference type="EC" id="1.1.1.103"/>
    </reaction>
</comment>
<comment type="cofactor">
    <cofactor evidence="1">
        <name>Zn(2+)</name>
        <dbReference type="ChEBI" id="CHEBI:29105"/>
    </cofactor>
    <text evidence="1">Binds 2 Zn(2+) ions per subunit.</text>
</comment>
<comment type="pathway">
    <text evidence="1">Amino-acid degradation; L-threonine degradation via oxydo-reductase pathway; glycine from L-threonine: step 1/2.</text>
</comment>
<comment type="subunit">
    <text evidence="1">Homotetramer.</text>
</comment>
<comment type="subcellular location">
    <subcellularLocation>
        <location evidence="1">Cytoplasm</location>
    </subcellularLocation>
</comment>
<comment type="similarity">
    <text evidence="1">Belongs to the zinc-containing alcohol dehydrogenase family.</text>
</comment>
<keyword id="KW-0963">Cytoplasm</keyword>
<keyword id="KW-0479">Metal-binding</keyword>
<keyword id="KW-0520">NAD</keyword>
<keyword id="KW-0560">Oxidoreductase</keyword>
<keyword id="KW-1185">Reference proteome</keyword>
<keyword id="KW-0862">Zinc</keyword>
<sequence>MKALSKLKAEEGIWMTDVPVPELGHNDLLIKIRKTAICGTDVHIYNWDEWSQKTIPVPMVVGHEYVGEVVGIGQEVKGFMIGDRVSGEGHITCGHCRNCRGGRTHLCRNTIGVGVNRPGCFAEYLVIPAFNAFKIPDNISDDLASIFDPFGNAVHTALSFDLVGEDVLVSGAGPIGIMAAAVAKHVGARNVVITDVNEYRLELARKMGITRAVNVAKENLNDVMAELGMTEGFDVGLEMPGAPPAFRTMLDTMNHGGRIAMLGIPPSDMSIDWTKVIFKGLFIKGIYGREMFETWYKMAALIQSGLDLSPIITHRFSIDDFQKGFDAMRSGQSGKVILSWD</sequence>
<dbReference type="EC" id="1.1.1.103" evidence="1"/>
<dbReference type="EMBL" id="CP000800">
    <property type="protein sequence ID" value="ABV18937.1"/>
    <property type="molecule type" value="Genomic_DNA"/>
</dbReference>
<dbReference type="RefSeq" id="WP_000646024.1">
    <property type="nucleotide sequence ID" value="NC_009801.1"/>
</dbReference>
<dbReference type="SMR" id="A7ZTH0"/>
<dbReference type="KEGG" id="ecw:EcE24377A_4120"/>
<dbReference type="HOGENOM" id="CLU_026673_11_0_6"/>
<dbReference type="UniPathway" id="UPA00046">
    <property type="reaction ID" value="UER00505"/>
</dbReference>
<dbReference type="Proteomes" id="UP000001122">
    <property type="component" value="Chromosome"/>
</dbReference>
<dbReference type="GO" id="GO:0005737">
    <property type="term" value="C:cytoplasm"/>
    <property type="evidence" value="ECO:0007669"/>
    <property type="project" value="UniProtKB-SubCell"/>
</dbReference>
<dbReference type="GO" id="GO:0008743">
    <property type="term" value="F:L-threonine 3-dehydrogenase activity"/>
    <property type="evidence" value="ECO:0007669"/>
    <property type="project" value="UniProtKB-UniRule"/>
</dbReference>
<dbReference type="GO" id="GO:0008270">
    <property type="term" value="F:zinc ion binding"/>
    <property type="evidence" value="ECO:0007669"/>
    <property type="project" value="UniProtKB-UniRule"/>
</dbReference>
<dbReference type="GO" id="GO:0019518">
    <property type="term" value="P:L-threonine catabolic process to glycine"/>
    <property type="evidence" value="ECO:0007669"/>
    <property type="project" value="UniProtKB-UniPathway"/>
</dbReference>
<dbReference type="FunFam" id="3.40.50.720:FF:000059">
    <property type="entry name" value="L-threonine 3-dehydrogenase"/>
    <property type="match status" value="1"/>
</dbReference>
<dbReference type="Gene3D" id="3.90.180.10">
    <property type="entry name" value="Medium-chain alcohol dehydrogenases, catalytic domain"/>
    <property type="match status" value="1"/>
</dbReference>
<dbReference type="Gene3D" id="3.40.50.720">
    <property type="entry name" value="NAD(P)-binding Rossmann-like Domain"/>
    <property type="match status" value="1"/>
</dbReference>
<dbReference type="HAMAP" id="MF_00627">
    <property type="entry name" value="Thr_dehydrog"/>
    <property type="match status" value="1"/>
</dbReference>
<dbReference type="InterPro" id="IPR013149">
    <property type="entry name" value="ADH-like_C"/>
</dbReference>
<dbReference type="InterPro" id="IPR013154">
    <property type="entry name" value="ADH-like_N"/>
</dbReference>
<dbReference type="InterPro" id="IPR002328">
    <property type="entry name" value="ADH_Zn_CS"/>
</dbReference>
<dbReference type="InterPro" id="IPR011032">
    <property type="entry name" value="GroES-like_sf"/>
</dbReference>
<dbReference type="InterPro" id="IPR004627">
    <property type="entry name" value="L-Threonine_3-DHase"/>
</dbReference>
<dbReference type="InterPro" id="IPR036291">
    <property type="entry name" value="NAD(P)-bd_dom_sf"/>
</dbReference>
<dbReference type="InterPro" id="IPR020843">
    <property type="entry name" value="PKS_ER"/>
</dbReference>
<dbReference type="InterPro" id="IPR050129">
    <property type="entry name" value="Zn_alcohol_dh"/>
</dbReference>
<dbReference type="NCBIfam" id="NF003808">
    <property type="entry name" value="PRK05396.1"/>
    <property type="match status" value="1"/>
</dbReference>
<dbReference type="NCBIfam" id="TIGR00692">
    <property type="entry name" value="tdh"/>
    <property type="match status" value="1"/>
</dbReference>
<dbReference type="PANTHER" id="PTHR43401">
    <property type="entry name" value="L-THREONINE 3-DEHYDROGENASE"/>
    <property type="match status" value="1"/>
</dbReference>
<dbReference type="PANTHER" id="PTHR43401:SF2">
    <property type="entry name" value="L-THREONINE 3-DEHYDROGENASE"/>
    <property type="match status" value="1"/>
</dbReference>
<dbReference type="Pfam" id="PF08240">
    <property type="entry name" value="ADH_N"/>
    <property type="match status" value="1"/>
</dbReference>
<dbReference type="Pfam" id="PF00107">
    <property type="entry name" value="ADH_zinc_N"/>
    <property type="match status" value="1"/>
</dbReference>
<dbReference type="SMART" id="SM00829">
    <property type="entry name" value="PKS_ER"/>
    <property type="match status" value="1"/>
</dbReference>
<dbReference type="SUPFAM" id="SSF50129">
    <property type="entry name" value="GroES-like"/>
    <property type="match status" value="1"/>
</dbReference>
<dbReference type="SUPFAM" id="SSF51735">
    <property type="entry name" value="NAD(P)-binding Rossmann-fold domains"/>
    <property type="match status" value="1"/>
</dbReference>
<dbReference type="PROSITE" id="PS00059">
    <property type="entry name" value="ADH_ZINC"/>
    <property type="match status" value="1"/>
</dbReference>
<feature type="chain" id="PRO_1000061392" description="L-threonine 3-dehydrogenase">
    <location>
        <begin position="1"/>
        <end position="341"/>
    </location>
</feature>
<feature type="active site" description="Charge relay system" evidence="1">
    <location>
        <position position="40"/>
    </location>
</feature>
<feature type="active site" description="Charge relay system" evidence="1">
    <location>
        <position position="43"/>
    </location>
</feature>
<feature type="binding site" evidence="1">
    <location>
        <position position="38"/>
    </location>
    <ligand>
        <name>Zn(2+)</name>
        <dbReference type="ChEBI" id="CHEBI:29105"/>
        <label>1</label>
        <note>catalytic</note>
    </ligand>
</feature>
<feature type="binding site" evidence="1">
    <location>
        <position position="63"/>
    </location>
    <ligand>
        <name>Zn(2+)</name>
        <dbReference type="ChEBI" id="CHEBI:29105"/>
        <label>1</label>
        <note>catalytic</note>
    </ligand>
</feature>
<feature type="binding site" evidence="1">
    <location>
        <position position="64"/>
    </location>
    <ligand>
        <name>Zn(2+)</name>
        <dbReference type="ChEBI" id="CHEBI:29105"/>
        <label>1</label>
        <note>catalytic</note>
    </ligand>
</feature>
<feature type="binding site" evidence="1">
    <location>
        <position position="93"/>
    </location>
    <ligand>
        <name>Zn(2+)</name>
        <dbReference type="ChEBI" id="CHEBI:29105"/>
        <label>2</label>
    </ligand>
</feature>
<feature type="binding site" evidence="1">
    <location>
        <position position="96"/>
    </location>
    <ligand>
        <name>Zn(2+)</name>
        <dbReference type="ChEBI" id="CHEBI:29105"/>
        <label>2</label>
    </ligand>
</feature>
<feature type="binding site" evidence="1">
    <location>
        <position position="99"/>
    </location>
    <ligand>
        <name>Zn(2+)</name>
        <dbReference type="ChEBI" id="CHEBI:29105"/>
        <label>2</label>
    </ligand>
</feature>
<feature type="binding site" evidence="1">
    <location>
        <position position="107"/>
    </location>
    <ligand>
        <name>Zn(2+)</name>
        <dbReference type="ChEBI" id="CHEBI:29105"/>
        <label>2</label>
    </ligand>
</feature>
<feature type="binding site" evidence="1">
    <location>
        <position position="175"/>
    </location>
    <ligand>
        <name>NAD(+)</name>
        <dbReference type="ChEBI" id="CHEBI:57540"/>
    </ligand>
</feature>
<feature type="binding site" evidence="1">
    <location>
        <position position="195"/>
    </location>
    <ligand>
        <name>NAD(+)</name>
        <dbReference type="ChEBI" id="CHEBI:57540"/>
    </ligand>
</feature>
<feature type="binding site" evidence="1">
    <location>
        <position position="200"/>
    </location>
    <ligand>
        <name>NAD(+)</name>
        <dbReference type="ChEBI" id="CHEBI:57540"/>
    </ligand>
</feature>
<feature type="binding site" evidence="1">
    <location>
        <begin position="262"/>
        <end position="264"/>
    </location>
    <ligand>
        <name>NAD(+)</name>
        <dbReference type="ChEBI" id="CHEBI:57540"/>
    </ligand>
</feature>
<feature type="binding site" evidence="1">
    <location>
        <begin position="286"/>
        <end position="287"/>
    </location>
    <ligand>
        <name>NAD(+)</name>
        <dbReference type="ChEBI" id="CHEBI:57540"/>
    </ligand>
</feature>
<feature type="site" description="Important for catalytic activity for the proton relay mechanism but does not participate directly in the coordination of zinc atom" evidence="1">
    <location>
        <position position="148"/>
    </location>
</feature>
<gene>
    <name evidence="1" type="primary">tdh</name>
    <name type="ordered locus">EcE24377A_4120</name>
</gene>
<accession>A7ZTH0</accession>
<organism>
    <name type="scientific">Escherichia coli O139:H28 (strain E24377A / ETEC)</name>
    <dbReference type="NCBI Taxonomy" id="331111"/>
    <lineage>
        <taxon>Bacteria</taxon>
        <taxon>Pseudomonadati</taxon>
        <taxon>Pseudomonadota</taxon>
        <taxon>Gammaproteobacteria</taxon>
        <taxon>Enterobacterales</taxon>
        <taxon>Enterobacteriaceae</taxon>
        <taxon>Escherichia</taxon>
    </lineage>
</organism>
<protein>
    <recommendedName>
        <fullName evidence="1">L-threonine 3-dehydrogenase</fullName>
        <shortName evidence="1">TDH</shortName>
        <ecNumber evidence="1">1.1.1.103</ecNumber>
    </recommendedName>
</protein>